<gene>
    <name evidence="1" type="primary">fabH</name>
    <name type="ordered locus">STER_0429</name>
</gene>
<reference key="1">
    <citation type="journal article" date="2006" name="Proc. Natl. Acad. Sci. U.S.A.">
        <title>Comparative genomics of the lactic acid bacteria.</title>
        <authorList>
            <person name="Makarova K.S."/>
            <person name="Slesarev A."/>
            <person name="Wolf Y.I."/>
            <person name="Sorokin A."/>
            <person name="Mirkin B."/>
            <person name="Koonin E.V."/>
            <person name="Pavlov A."/>
            <person name="Pavlova N."/>
            <person name="Karamychev V."/>
            <person name="Polouchine N."/>
            <person name="Shakhova V."/>
            <person name="Grigoriev I."/>
            <person name="Lou Y."/>
            <person name="Rohksar D."/>
            <person name="Lucas S."/>
            <person name="Huang K."/>
            <person name="Goodstein D.M."/>
            <person name="Hawkins T."/>
            <person name="Plengvidhya V."/>
            <person name="Welker D."/>
            <person name="Hughes J."/>
            <person name="Goh Y."/>
            <person name="Benson A."/>
            <person name="Baldwin K."/>
            <person name="Lee J.-H."/>
            <person name="Diaz-Muniz I."/>
            <person name="Dosti B."/>
            <person name="Smeianov V."/>
            <person name="Wechter W."/>
            <person name="Barabote R."/>
            <person name="Lorca G."/>
            <person name="Altermann E."/>
            <person name="Barrangou R."/>
            <person name="Ganesan B."/>
            <person name="Xie Y."/>
            <person name="Rawsthorne H."/>
            <person name="Tamir D."/>
            <person name="Parker C."/>
            <person name="Breidt F."/>
            <person name="Broadbent J.R."/>
            <person name="Hutkins R."/>
            <person name="O'Sullivan D."/>
            <person name="Steele J."/>
            <person name="Unlu G."/>
            <person name="Saier M.H. Jr."/>
            <person name="Klaenhammer T."/>
            <person name="Richardson P."/>
            <person name="Kozyavkin S."/>
            <person name="Weimer B.C."/>
            <person name="Mills D.A."/>
        </authorList>
    </citation>
    <scope>NUCLEOTIDE SEQUENCE [LARGE SCALE GENOMIC DNA]</scope>
    <source>
        <strain>ATCC BAA-491 / LMD-9</strain>
    </source>
</reference>
<comment type="function">
    <text evidence="1">Catalyzes the condensation reaction of fatty acid synthesis by the addition to an acyl acceptor of two carbons from malonyl-ACP. Catalyzes the first condensation reaction which initiates fatty acid synthesis and may therefore play a role in governing the total rate of fatty acid production. Possesses both acetoacetyl-ACP synthase and acetyl transacylase activities. Its substrate specificity determines the biosynthesis of branched-chain and/or straight-chain of fatty acids.</text>
</comment>
<comment type="catalytic activity">
    <reaction evidence="1">
        <text>malonyl-[ACP] + acetyl-CoA + H(+) = 3-oxobutanoyl-[ACP] + CO2 + CoA</text>
        <dbReference type="Rhea" id="RHEA:12080"/>
        <dbReference type="Rhea" id="RHEA-COMP:9623"/>
        <dbReference type="Rhea" id="RHEA-COMP:9625"/>
        <dbReference type="ChEBI" id="CHEBI:15378"/>
        <dbReference type="ChEBI" id="CHEBI:16526"/>
        <dbReference type="ChEBI" id="CHEBI:57287"/>
        <dbReference type="ChEBI" id="CHEBI:57288"/>
        <dbReference type="ChEBI" id="CHEBI:78449"/>
        <dbReference type="ChEBI" id="CHEBI:78450"/>
        <dbReference type="EC" id="2.3.1.180"/>
    </reaction>
</comment>
<comment type="pathway">
    <text evidence="1">Lipid metabolism; fatty acid biosynthesis.</text>
</comment>
<comment type="subunit">
    <text evidence="1">Homodimer.</text>
</comment>
<comment type="subcellular location">
    <subcellularLocation>
        <location evidence="1">Cytoplasm</location>
    </subcellularLocation>
</comment>
<comment type="domain">
    <text evidence="1">The last Arg residue of the ACP-binding site is essential for the weak association between ACP/AcpP and FabH.</text>
</comment>
<comment type="similarity">
    <text evidence="1">Belongs to the thiolase-like superfamily. FabH family.</text>
</comment>
<name>FABH_STRTD</name>
<sequence length="320" mass="34183">MAFAKISQVAHYAPAQVVTNDDLSKIMDTSDEWIRSRTGIQERRISLNENTSDLATNVAYQLLEKSGLSPEELDFVLVATISPDNSMPSVAARVQGTIGAVNAFAFDITAACSGFVFALATAEKLIKSGAYKKGLVIGAEVLSKTLDWSDRATAVLFGDGAGGVLLEESEEEHFFGESLNTDGSKGGLESGASAVISPYSDGTEQPNPYMQMDGKAIFDFAVKTVSKSIKALVEEKGEPDYFLLHQANIRILDTMAKKIDVSRDKFLANMMSYGNTSAASIPILLSENVANETLKLGSDQTILLSGFGGGLTWGSLIVKI</sequence>
<accession>Q03M55</accession>
<keyword id="KW-0012">Acyltransferase</keyword>
<keyword id="KW-0963">Cytoplasm</keyword>
<keyword id="KW-0275">Fatty acid biosynthesis</keyword>
<keyword id="KW-0276">Fatty acid metabolism</keyword>
<keyword id="KW-0444">Lipid biosynthesis</keyword>
<keyword id="KW-0443">Lipid metabolism</keyword>
<keyword id="KW-0511">Multifunctional enzyme</keyword>
<keyword id="KW-0808">Transferase</keyword>
<protein>
    <recommendedName>
        <fullName evidence="1">Beta-ketoacyl-[acyl-carrier-protein] synthase III</fullName>
        <shortName evidence="1">Beta-ketoacyl-ACP synthase III</shortName>
        <shortName evidence="1">KAS III</shortName>
        <ecNumber evidence="1">2.3.1.180</ecNumber>
    </recommendedName>
    <alternativeName>
        <fullName evidence="1">3-oxoacyl-[acyl-carrier-protein] synthase 3</fullName>
    </alternativeName>
    <alternativeName>
        <fullName evidence="1">3-oxoacyl-[acyl-carrier-protein] synthase III</fullName>
    </alternativeName>
</protein>
<feature type="chain" id="PRO_1000056431" description="Beta-ketoacyl-[acyl-carrier-protein] synthase III">
    <location>
        <begin position="1"/>
        <end position="320"/>
    </location>
</feature>
<feature type="region of interest" description="ACP-binding" evidence="1">
    <location>
        <begin position="246"/>
        <end position="250"/>
    </location>
</feature>
<feature type="active site" evidence="1">
    <location>
        <position position="112"/>
    </location>
</feature>
<feature type="active site" evidence="1">
    <location>
        <position position="245"/>
    </location>
</feature>
<feature type="active site" evidence="1">
    <location>
        <position position="275"/>
    </location>
</feature>
<organism>
    <name type="scientific">Streptococcus thermophilus (strain ATCC BAA-491 / LMD-9)</name>
    <dbReference type="NCBI Taxonomy" id="322159"/>
    <lineage>
        <taxon>Bacteria</taxon>
        <taxon>Bacillati</taxon>
        <taxon>Bacillota</taxon>
        <taxon>Bacilli</taxon>
        <taxon>Lactobacillales</taxon>
        <taxon>Streptococcaceae</taxon>
        <taxon>Streptococcus</taxon>
    </lineage>
</organism>
<evidence type="ECO:0000255" key="1">
    <source>
        <dbReference type="HAMAP-Rule" id="MF_01815"/>
    </source>
</evidence>
<proteinExistence type="inferred from homology"/>
<dbReference type="EC" id="2.3.1.180" evidence="1"/>
<dbReference type="EMBL" id="CP000419">
    <property type="protein sequence ID" value="ABJ65717.1"/>
    <property type="molecule type" value="Genomic_DNA"/>
</dbReference>
<dbReference type="RefSeq" id="WP_002949773.1">
    <property type="nucleotide sequence ID" value="NZ_CP086001.1"/>
</dbReference>
<dbReference type="SMR" id="Q03M55"/>
<dbReference type="KEGG" id="ste:STER_0429"/>
<dbReference type="HOGENOM" id="CLU_039592_4_1_9"/>
<dbReference type="UniPathway" id="UPA00094"/>
<dbReference type="GO" id="GO:0005737">
    <property type="term" value="C:cytoplasm"/>
    <property type="evidence" value="ECO:0007669"/>
    <property type="project" value="UniProtKB-SubCell"/>
</dbReference>
<dbReference type="GO" id="GO:0004315">
    <property type="term" value="F:3-oxoacyl-[acyl-carrier-protein] synthase activity"/>
    <property type="evidence" value="ECO:0007669"/>
    <property type="project" value="InterPro"/>
</dbReference>
<dbReference type="GO" id="GO:0033818">
    <property type="term" value="F:beta-ketoacyl-acyl-carrier-protein synthase III activity"/>
    <property type="evidence" value="ECO:0007669"/>
    <property type="project" value="UniProtKB-UniRule"/>
</dbReference>
<dbReference type="GO" id="GO:0006633">
    <property type="term" value="P:fatty acid biosynthetic process"/>
    <property type="evidence" value="ECO:0007669"/>
    <property type="project" value="UniProtKB-UniRule"/>
</dbReference>
<dbReference type="CDD" id="cd00830">
    <property type="entry name" value="KAS_III"/>
    <property type="match status" value="1"/>
</dbReference>
<dbReference type="Gene3D" id="3.40.47.10">
    <property type="match status" value="1"/>
</dbReference>
<dbReference type="HAMAP" id="MF_01815">
    <property type="entry name" value="FabH"/>
    <property type="match status" value="1"/>
</dbReference>
<dbReference type="InterPro" id="IPR013747">
    <property type="entry name" value="ACP_syn_III_C"/>
</dbReference>
<dbReference type="InterPro" id="IPR013751">
    <property type="entry name" value="ACP_syn_III_N"/>
</dbReference>
<dbReference type="InterPro" id="IPR004655">
    <property type="entry name" value="FabH"/>
</dbReference>
<dbReference type="InterPro" id="IPR016039">
    <property type="entry name" value="Thiolase-like"/>
</dbReference>
<dbReference type="NCBIfam" id="TIGR00747">
    <property type="entry name" value="fabH"/>
    <property type="match status" value="1"/>
</dbReference>
<dbReference type="NCBIfam" id="NF006829">
    <property type="entry name" value="PRK09352.1"/>
    <property type="match status" value="1"/>
</dbReference>
<dbReference type="PANTHER" id="PTHR43091">
    <property type="entry name" value="3-OXOACYL-[ACYL-CARRIER-PROTEIN] SYNTHASE"/>
    <property type="match status" value="1"/>
</dbReference>
<dbReference type="PANTHER" id="PTHR43091:SF1">
    <property type="entry name" value="BETA-KETOACYL-[ACYL-CARRIER-PROTEIN] SYNTHASE III, CHLOROPLASTIC"/>
    <property type="match status" value="1"/>
</dbReference>
<dbReference type="Pfam" id="PF08545">
    <property type="entry name" value="ACP_syn_III"/>
    <property type="match status" value="1"/>
</dbReference>
<dbReference type="Pfam" id="PF08541">
    <property type="entry name" value="ACP_syn_III_C"/>
    <property type="match status" value="1"/>
</dbReference>
<dbReference type="SUPFAM" id="SSF53901">
    <property type="entry name" value="Thiolase-like"/>
    <property type="match status" value="1"/>
</dbReference>